<proteinExistence type="evidence at protein level"/>
<name>PLAT1_ARATH</name>
<comment type="function">
    <text evidence="3">Positive regulator of abiotic stress tolerance involved in the regulation of plant growth. May be a downstream target of the abscisic acid (ABA) signaling pathway.</text>
</comment>
<comment type="subcellular location">
    <subcellularLocation>
        <location evidence="3">Endoplasmic reticulum</location>
    </subcellularLocation>
    <subcellularLocation>
        <location evidence="2">Plastid</location>
        <location evidence="2">Chloroplast</location>
        <location evidence="2">Plastoglobule</location>
    </subcellularLocation>
    <text evidence="3">Localizes to rod shaped ER structures that resemble ER bodies.</text>
</comment>
<comment type="tissue specificity">
    <text evidence="3">Expressed in root tips, pericycle cells, lateral root primordia, stomata, leaf vasculature, hydathodes and floral organs.</text>
</comment>
<comment type="induction">
    <text evidence="3">By salt and cold stresses, and abscisic acid.</text>
</comment>
<comment type="disruption phenotype">
    <text evidence="3">No visible phenotype under normal growth conditions, but mutant plant have enhanced sensitivity to salt, drought and cold stresses.</text>
</comment>
<comment type="sequence caution" evidence="5">
    <conflict type="frameshift">
        <sequence resource="EMBL-CDS" id="AAL09786"/>
    </conflict>
</comment>
<gene>
    <name evidence="4" type="primary">PLAT1</name>
    <name evidence="6" type="ordered locus">At4g39730</name>
</gene>
<sequence>MARRDVLLPFLLLLATVSAVAFAEDDPDCVYTFYLRTGSIWKAGTDSIISARIYDKDGDYIGIKNLQAWAGLMGPDYNYFERGNLDIFSGRAPCLPSPICALNLTSDGSGDHHGWYVNYVEITTAGVHAQCSTQDFEIEQWLATDTSPYELTAVRNNCPVKLRDSVSRVGSEIRKKLSWVV</sequence>
<keyword id="KW-0007">Acetylation</keyword>
<keyword id="KW-0150">Chloroplast</keyword>
<keyword id="KW-0256">Endoplasmic reticulum</keyword>
<keyword id="KW-0341">Growth regulation</keyword>
<keyword id="KW-0934">Plastid</keyword>
<keyword id="KW-1185">Reference proteome</keyword>
<keyword id="KW-0732">Signal</keyword>
<keyword id="KW-0346">Stress response</keyword>
<accession>O65660</accession>
<accession>Q93ZG8</accession>
<reference key="1">
    <citation type="journal article" date="1999" name="Nature">
        <title>Sequence and analysis of chromosome 4 of the plant Arabidopsis thaliana.</title>
        <authorList>
            <person name="Mayer K.F.X."/>
            <person name="Schueller C."/>
            <person name="Wambutt R."/>
            <person name="Murphy G."/>
            <person name="Volckaert G."/>
            <person name="Pohl T."/>
            <person name="Duesterhoeft A."/>
            <person name="Stiekema W."/>
            <person name="Entian K.-D."/>
            <person name="Terryn N."/>
            <person name="Harris B."/>
            <person name="Ansorge W."/>
            <person name="Brandt P."/>
            <person name="Grivell L.A."/>
            <person name="Rieger M."/>
            <person name="Weichselgartner M."/>
            <person name="de Simone V."/>
            <person name="Obermaier B."/>
            <person name="Mache R."/>
            <person name="Mueller M."/>
            <person name="Kreis M."/>
            <person name="Delseny M."/>
            <person name="Puigdomenech P."/>
            <person name="Watson M."/>
            <person name="Schmidtheini T."/>
            <person name="Reichert B."/>
            <person name="Portetelle D."/>
            <person name="Perez-Alonso M."/>
            <person name="Boutry M."/>
            <person name="Bancroft I."/>
            <person name="Vos P."/>
            <person name="Hoheisel J."/>
            <person name="Zimmermann W."/>
            <person name="Wedler H."/>
            <person name="Ridley P."/>
            <person name="Langham S.-A."/>
            <person name="McCullagh B."/>
            <person name="Bilham L."/>
            <person name="Robben J."/>
            <person name="van der Schueren J."/>
            <person name="Grymonprez B."/>
            <person name="Chuang Y.-J."/>
            <person name="Vandenbussche F."/>
            <person name="Braeken M."/>
            <person name="Weltjens I."/>
            <person name="Voet M."/>
            <person name="Bastiaens I."/>
            <person name="Aert R."/>
            <person name="Defoor E."/>
            <person name="Weitzenegger T."/>
            <person name="Bothe G."/>
            <person name="Ramsperger U."/>
            <person name="Hilbert H."/>
            <person name="Braun M."/>
            <person name="Holzer E."/>
            <person name="Brandt A."/>
            <person name="Peters S."/>
            <person name="van Staveren M."/>
            <person name="Dirkse W."/>
            <person name="Mooijman P."/>
            <person name="Klein Lankhorst R."/>
            <person name="Rose M."/>
            <person name="Hauf J."/>
            <person name="Koetter P."/>
            <person name="Berneiser S."/>
            <person name="Hempel S."/>
            <person name="Feldpausch M."/>
            <person name="Lamberth S."/>
            <person name="Van den Daele H."/>
            <person name="De Keyser A."/>
            <person name="Buysshaert C."/>
            <person name="Gielen J."/>
            <person name="Villarroel R."/>
            <person name="De Clercq R."/>
            <person name="van Montagu M."/>
            <person name="Rogers J."/>
            <person name="Cronin A."/>
            <person name="Quail M.A."/>
            <person name="Bray-Allen S."/>
            <person name="Clark L."/>
            <person name="Doggett J."/>
            <person name="Hall S."/>
            <person name="Kay M."/>
            <person name="Lennard N."/>
            <person name="McLay K."/>
            <person name="Mayes R."/>
            <person name="Pettett A."/>
            <person name="Rajandream M.A."/>
            <person name="Lyne M."/>
            <person name="Benes V."/>
            <person name="Rechmann S."/>
            <person name="Borkova D."/>
            <person name="Bloecker H."/>
            <person name="Scharfe M."/>
            <person name="Grimm M."/>
            <person name="Loehnert T.-H."/>
            <person name="Dose S."/>
            <person name="de Haan M."/>
            <person name="Maarse A.C."/>
            <person name="Schaefer M."/>
            <person name="Mueller-Auer S."/>
            <person name="Gabel C."/>
            <person name="Fuchs M."/>
            <person name="Fartmann B."/>
            <person name="Granderath K."/>
            <person name="Dauner D."/>
            <person name="Herzl A."/>
            <person name="Neumann S."/>
            <person name="Argiriou A."/>
            <person name="Vitale D."/>
            <person name="Liguori R."/>
            <person name="Piravandi E."/>
            <person name="Massenet O."/>
            <person name="Quigley F."/>
            <person name="Clabauld G."/>
            <person name="Muendlein A."/>
            <person name="Felber R."/>
            <person name="Schnabl S."/>
            <person name="Hiller R."/>
            <person name="Schmidt W."/>
            <person name="Lecharny A."/>
            <person name="Aubourg S."/>
            <person name="Chefdor F."/>
            <person name="Cooke R."/>
            <person name="Berger C."/>
            <person name="Monfort A."/>
            <person name="Casacuberta E."/>
            <person name="Gibbons T."/>
            <person name="Weber N."/>
            <person name="Vandenbol M."/>
            <person name="Bargues M."/>
            <person name="Terol J."/>
            <person name="Torres A."/>
            <person name="Perez-Perez A."/>
            <person name="Purnelle B."/>
            <person name="Bent E."/>
            <person name="Johnson S."/>
            <person name="Tacon D."/>
            <person name="Jesse T."/>
            <person name="Heijnen L."/>
            <person name="Schwarz S."/>
            <person name="Scholler P."/>
            <person name="Heber S."/>
            <person name="Francs P."/>
            <person name="Bielke C."/>
            <person name="Frishman D."/>
            <person name="Haase D."/>
            <person name="Lemcke K."/>
            <person name="Mewes H.-W."/>
            <person name="Stocker S."/>
            <person name="Zaccaria P."/>
            <person name="Bevan M."/>
            <person name="Wilson R.K."/>
            <person name="de la Bastide M."/>
            <person name="Habermann K."/>
            <person name="Parnell L."/>
            <person name="Dedhia N."/>
            <person name="Gnoj L."/>
            <person name="Schutz K."/>
            <person name="Huang E."/>
            <person name="Spiegel L."/>
            <person name="Sekhon M."/>
            <person name="Murray J."/>
            <person name="Sheet P."/>
            <person name="Cordes M."/>
            <person name="Abu-Threideh J."/>
            <person name="Stoneking T."/>
            <person name="Kalicki J."/>
            <person name="Graves T."/>
            <person name="Harmon G."/>
            <person name="Edwards J."/>
            <person name="Latreille P."/>
            <person name="Courtney L."/>
            <person name="Cloud J."/>
            <person name="Abbott A."/>
            <person name="Scott K."/>
            <person name="Johnson D."/>
            <person name="Minx P."/>
            <person name="Bentley D."/>
            <person name="Fulton B."/>
            <person name="Miller N."/>
            <person name="Greco T."/>
            <person name="Kemp K."/>
            <person name="Kramer J."/>
            <person name="Fulton L."/>
            <person name="Mardis E."/>
            <person name="Dante M."/>
            <person name="Pepin K."/>
            <person name="Hillier L.W."/>
            <person name="Nelson J."/>
            <person name="Spieth J."/>
            <person name="Ryan E."/>
            <person name="Andrews S."/>
            <person name="Geisel C."/>
            <person name="Layman D."/>
            <person name="Du H."/>
            <person name="Ali J."/>
            <person name="Berghoff A."/>
            <person name="Jones K."/>
            <person name="Drone K."/>
            <person name="Cotton M."/>
            <person name="Joshu C."/>
            <person name="Antonoiu B."/>
            <person name="Zidanic M."/>
            <person name="Strong C."/>
            <person name="Sun H."/>
            <person name="Lamar B."/>
            <person name="Yordan C."/>
            <person name="Ma P."/>
            <person name="Zhong J."/>
            <person name="Preston R."/>
            <person name="Vil D."/>
            <person name="Shekher M."/>
            <person name="Matero A."/>
            <person name="Shah R."/>
            <person name="Swaby I.K."/>
            <person name="O'Shaughnessy A."/>
            <person name="Rodriguez M."/>
            <person name="Hoffman J."/>
            <person name="Till S."/>
            <person name="Granat S."/>
            <person name="Shohdy N."/>
            <person name="Hasegawa A."/>
            <person name="Hameed A."/>
            <person name="Lodhi M."/>
            <person name="Johnson A."/>
            <person name="Chen E."/>
            <person name="Marra M.A."/>
            <person name="Martienssen R."/>
            <person name="McCombie W.R."/>
        </authorList>
    </citation>
    <scope>NUCLEOTIDE SEQUENCE [LARGE SCALE GENOMIC DNA]</scope>
    <source>
        <strain>cv. Columbia</strain>
    </source>
</reference>
<reference key="2">
    <citation type="journal article" date="2017" name="Plant J.">
        <title>Araport11: a complete reannotation of the Arabidopsis thaliana reference genome.</title>
        <authorList>
            <person name="Cheng C.Y."/>
            <person name="Krishnakumar V."/>
            <person name="Chan A.P."/>
            <person name="Thibaud-Nissen F."/>
            <person name="Schobel S."/>
            <person name="Town C.D."/>
        </authorList>
    </citation>
    <scope>GENOME REANNOTATION</scope>
    <source>
        <strain>cv. Columbia</strain>
    </source>
</reference>
<reference key="3">
    <citation type="journal article" date="2003" name="Science">
        <title>Empirical analysis of transcriptional activity in the Arabidopsis genome.</title>
        <authorList>
            <person name="Yamada K."/>
            <person name="Lim J."/>
            <person name="Dale J.M."/>
            <person name="Chen H."/>
            <person name="Shinn P."/>
            <person name="Palm C.J."/>
            <person name="Southwick A.M."/>
            <person name="Wu H.C."/>
            <person name="Kim C.J."/>
            <person name="Nguyen M."/>
            <person name="Pham P.K."/>
            <person name="Cheuk R.F."/>
            <person name="Karlin-Newmann G."/>
            <person name="Liu S.X."/>
            <person name="Lam B."/>
            <person name="Sakano H."/>
            <person name="Wu T."/>
            <person name="Yu G."/>
            <person name="Miranda M."/>
            <person name="Quach H.L."/>
            <person name="Tripp M."/>
            <person name="Chang C.H."/>
            <person name="Lee J.M."/>
            <person name="Toriumi M.J."/>
            <person name="Chan M.M."/>
            <person name="Tang C.C."/>
            <person name="Onodera C.S."/>
            <person name="Deng J.M."/>
            <person name="Akiyama K."/>
            <person name="Ansari Y."/>
            <person name="Arakawa T."/>
            <person name="Banh J."/>
            <person name="Banno F."/>
            <person name="Bowser L."/>
            <person name="Brooks S.Y."/>
            <person name="Carninci P."/>
            <person name="Chao Q."/>
            <person name="Choy N."/>
            <person name="Enju A."/>
            <person name="Goldsmith A.D."/>
            <person name="Gurjal M."/>
            <person name="Hansen N.F."/>
            <person name="Hayashizaki Y."/>
            <person name="Johnson-Hopson C."/>
            <person name="Hsuan V.W."/>
            <person name="Iida K."/>
            <person name="Karnes M."/>
            <person name="Khan S."/>
            <person name="Koesema E."/>
            <person name="Ishida J."/>
            <person name="Jiang P.X."/>
            <person name="Jones T."/>
            <person name="Kawai J."/>
            <person name="Kamiya A."/>
            <person name="Meyers C."/>
            <person name="Nakajima M."/>
            <person name="Narusaka M."/>
            <person name="Seki M."/>
            <person name="Sakurai T."/>
            <person name="Satou M."/>
            <person name="Tamse R."/>
            <person name="Vaysberg M."/>
            <person name="Wallender E.K."/>
            <person name="Wong C."/>
            <person name="Yamamura Y."/>
            <person name="Yuan S."/>
            <person name="Shinozaki K."/>
            <person name="Davis R.W."/>
            <person name="Theologis A."/>
            <person name="Ecker J.R."/>
        </authorList>
    </citation>
    <scope>NUCLEOTIDE SEQUENCE [LARGE SCALE MRNA]</scope>
    <source>
        <strain>cv. Columbia</strain>
    </source>
</reference>
<reference key="4">
    <citation type="submission" date="2002-03" db="EMBL/GenBank/DDBJ databases">
        <title>Full-length cDNA from Arabidopsis thaliana.</title>
        <authorList>
            <person name="Brover V.V."/>
            <person name="Troukhan M.E."/>
            <person name="Alexandrov N.A."/>
            <person name="Lu Y.-P."/>
            <person name="Flavell R.B."/>
            <person name="Feldmann K.A."/>
        </authorList>
    </citation>
    <scope>NUCLEOTIDE SEQUENCE [LARGE SCALE MRNA]</scope>
</reference>
<reference key="5">
    <citation type="journal article" date="2004" name="Electrophoresis">
        <title>Defining the plant disulfide proteome.</title>
        <authorList>
            <person name="Lee K."/>
            <person name="Lee J."/>
            <person name="Kim Y."/>
            <person name="Bae D."/>
            <person name="Kang K.Y."/>
            <person name="Yoon S.C."/>
            <person name="Lim D."/>
        </authorList>
    </citation>
    <scope>IDENTIFICATION BY MASS SPECTROMETRY</scope>
</reference>
<reference key="6">
    <citation type="journal article" date="2012" name="Mol. Cell. Proteomics">
        <title>Comparative large-scale characterisation of plant vs. mammal proteins reveals similar and idiosyncratic N-alpha acetylation features.</title>
        <authorList>
            <person name="Bienvenut W.V."/>
            <person name="Sumpton D."/>
            <person name="Martinez A."/>
            <person name="Lilla S."/>
            <person name="Espagne C."/>
            <person name="Meinnel T."/>
            <person name="Giglione C."/>
        </authorList>
    </citation>
    <scope>ACETYLATION [LARGE SCALE ANALYSIS] AT ALA-15</scope>
    <scope>CLEAVAGE OF SIGNAL PEPTIDE [LARGE SCALE ANALYSIS] AFTER LEU-14</scope>
    <scope>IDENTIFICATION BY MASS SPECTROMETRY [LARGE SCALE ANALYSIS]</scope>
</reference>
<reference key="7">
    <citation type="journal article" date="2012" name="Plant Physiol.">
        <title>The functional network of the Arabidopsis plastoglobule proteome based on quantitative proteomics and genome-wide coexpression analysis.</title>
        <authorList>
            <person name="Lundquist P.K."/>
            <person name="Poliakov A."/>
            <person name="Bhuiyan N.H."/>
            <person name="Zybailov B."/>
            <person name="Sun Q."/>
            <person name="van Wijk K.J."/>
        </authorList>
    </citation>
    <scope>IDENTIFICATION BY MASS SPECTROMETRY</scope>
    <scope>SUBCELLULAR LOCATION [LARGE SCALE ANALYSIS]</scope>
    <source>
        <strain>cv. Columbia</strain>
    </source>
</reference>
<reference key="8">
    <citation type="journal article" date="2014" name="PLoS ONE">
        <title>The Arabidopsis PLAT domain protein1 is critically involved in abiotic stress tolerance.</title>
        <authorList>
            <person name="Hyun T.K."/>
            <person name="van der Graaff E."/>
            <person name="Albacete A."/>
            <person name="Eom S.H."/>
            <person name="Grosskinsky D.K."/>
            <person name="Boehm H."/>
            <person name="Janschek U."/>
            <person name="Rim Y."/>
            <person name="Ali W.W."/>
            <person name="Kim S.Y."/>
            <person name="Roitsch T."/>
        </authorList>
    </citation>
    <scope>FUNCTION</scope>
    <scope>SUBCELLULAR LOCATION</scope>
    <scope>TISSUE SPECIFICITY</scope>
    <scope>INDUCTION</scope>
    <scope>DISRUPTION PHENOTYPE</scope>
</reference>
<dbReference type="EMBL" id="AL022605">
    <property type="protein sequence ID" value="CAA18759.1"/>
    <property type="molecule type" value="Genomic_DNA"/>
</dbReference>
<dbReference type="EMBL" id="AL161595">
    <property type="protein sequence ID" value="CAB80636.1"/>
    <property type="molecule type" value="Genomic_DNA"/>
</dbReference>
<dbReference type="EMBL" id="CP002687">
    <property type="protein sequence ID" value="AEE87110.1"/>
    <property type="molecule type" value="Genomic_DNA"/>
</dbReference>
<dbReference type="EMBL" id="AY057547">
    <property type="protein sequence ID" value="AAL09786.1"/>
    <property type="status" value="ALT_FRAME"/>
    <property type="molecule type" value="mRNA"/>
</dbReference>
<dbReference type="EMBL" id="AY079024">
    <property type="protein sequence ID" value="AAL84978.1"/>
    <property type="molecule type" value="mRNA"/>
</dbReference>
<dbReference type="EMBL" id="AY093757">
    <property type="protein sequence ID" value="AAM10381.1"/>
    <property type="molecule type" value="mRNA"/>
</dbReference>
<dbReference type="EMBL" id="AY088352">
    <property type="protein sequence ID" value="AAM65891.1"/>
    <property type="molecule type" value="mRNA"/>
</dbReference>
<dbReference type="PIR" id="T05010">
    <property type="entry name" value="T05010"/>
</dbReference>
<dbReference type="RefSeq" id="NP_195683.1">
    <property type="nucleotide sequence ID" value="NM_120134.3"/>
</dbReference>
<dbReference type="SMR" id="O65660"/>
<dbReference type="FunCoup" id="O65660">
    <property type="interactions" value="285"/>
</dbReference>
<dbReference type="STRING" id="3702.O65660"/>
<dbReference type="iPTMnet" id="O65660"/>
<dbReference type="PaxDb" id="3702-AT4G39730.1"/>
<dbReference type="ProteomicsDB" id="236745"/>
<dbReference type="EnsemblPlants" id="AT4G39730.1">
    <property type="protein sequence ID" value="AT4G39730.1"/>
    <property type="gene ID" value="AT4G39730"/>
</dbReference>
<dbReference type="GeneID" id="830128"/>
<dbReference type="Gramene" id="AT4G39730.1">
    <property type="protein sequence ID" value="AT4G39730.1"/>
    <property type="gene ID" value="AT4G39730"/>
</dbReference>
<dbReference type="KEGG" id="ath:AT4G39730"/>
<dbReference type="Araport" id="AT4G39730"/>
<dbReference type="TAIR" id="AT4G39730">
    <property type="gene designation" value="PLAT1"/>
</dbReference>
<dbReference type="eggNOG" id="ENOG502RZE1">
    <property type="taxonomic scope" value="Eukaryota"/>
</dbReference>
<dbReference type="HOGENOM" id="CLU_092946_1_0_1"/>
<dbReference type="InParanoid" id="O65660"/>
<dbReference type="OMA" id="WYANYVE"/>
<dbReference type="OrthoDB" id="5322100at2759"/>
<dbReference type="PhylomeDB" id="O65660"/>
<dbReference type="PRO" id="PR:O65660"/>
<dbReference type="Proteomes" id="UP000006548">
    <property type="component" value="Chromosome 4"/>
</dbReference>
<dbReference type="ExpressionAtlas" id="O65660">
    <property type="expression patterns" value="baseline and differential"/>
</dbReference>
<dbReference type="GO" id="GO:0009535">
    <property type="term" value="C:chloroplast thylakoid membrane"/>
    <property type="evidence" value="ECO:0007005"/>
    <property type="project" value="TAIR"/>
</dbReference>
<dbReference type="GO" id="GO:0005783">
    <property type="term" value="C:endoplasmic reticulum"/>
    <property type="evidence" value="ECO:0000314"/>
    <property type="project" value="UniProtKB"/>
</dbReference>
<dbReference type="GO" id="GO:0000325">
    <property type="term" value="C:plant-type vacuole"/>
    <property type="evidence" value="ECO:0007005"/>
    <property type="project" value="TAIR"/>
</dbReference>
<dbReference type="GO" id="GO:0005886">
    <property type="term" value="C:plasma membrane"/>
    <property type="evidence" value="ECO:0007005"/>
    <property type="project" value="TAIR"/>
</dbReference>
<dbReference type="GO" id="GO:0010287">
    <property type="term" value="C:plastoglobule"/>
    <property type="evidence" value="ECO:0007669"/>
    <property type="project" value="UniProtKB-SubCell"/>
</dbReference>
<dbReference type="GO" id="GO:0099503">
    <property type="term" value="C:secretory vesicle"/>
    <property type="evidence" value="ECO:0007005"/>
    <property type="project" value="TAIR"/>
</dbReference>
<dbReference type="GO" id="GO:0009579">
    <property type="term" value="C:thylakoid"/>
    <property type="evidence" value="ECO:0007005"/>
    <property type="project" value="TAIR"/>
</dbReference>
<dbReference type="GO" id="GO:0009409">
    <property type="term" value="P:response to cold"/>
    <property type="evidence" value="ECO:0000315"/>
    <property type="project" value="UniProtKB"/>
</dbReference>
<dbReference type="GO" id="GO:0009651">
    <property type="term" value="P:response to salt stress"/>
    <property type="evidence" value="ECO:0000315"/>
    <property type="project" value="UniProtKB"/>
</dbReference>
<dbReference type="GO" id="GO:0009414">
    <property type="term" value="P:response to water deprivation"/>
    <property type="evidence" value="ECO:0000315"/>
    <property type="project" value="UniProtKB"/>
</dbReference>
<dbReference type="CDD" id="cd01754">
    <property type="entry name" value="PLAT_plant_stress"/>
    <property type="match status" value="1"/>
</dbReference>
<dbReference type="FunFam" id="2.60.60.20:FF:000020">
    <property type="entry name" value="Lipid-associated family protein"/>
    <property type="match status" value="1"/>
</dbReference>
<dbReference type="Gene3D" id="2.60.60.20">
    <property type="entry name" value="PLAT/LH2 domain"/>
    <property type="match status" value="1"/>
</dbReference>
<dbReference type="InterPro" id="IPR001024">
    <property type="entry name" value="PLAT/LH2_dom"/>
</dbReference>
<dbReference type="InterPro" id="IPR036392">
    <property type="entry name" value="PLAT/LH2_dom_sf"/>
</dbReference>
<dbReference type="PANTHER" id="PTHR31718">
    <property type="entry name" value="PLAT DOMAIN-CONTAINING PROTEIN"/>
    <property type="match status" value="1"/>
</dbReference>
<dbReference type="PANTHER" id="PTHR31718:SF61">
    <property type="entry name" value="PLAT DOMAIN-CONTAINING PROTEIN 1"/>
    <property type="match status" value="1"/>
</dbReference>
<dbReference type="Pfam" id="PF01477">
    <property type="entry name" value="PLAT"/>
    <property type="match status" value="1"/>
</dbReference>
<dbReference type="SUPFAM" id="SSF49723">
    <property type="entry name" value="Lipase/lipooxygenase domain (PLAT/LH2 domain)"/>
    <property type="match status" value="1"/>
</dbReference>
<dbReference type="PROSITE" id="PS50095">
    <property type="entry name" value="PLAT"/>
    <property type="match status" value="1"/>
</dbReference>
<protein>
    <recommendedName>
        <fullName evidence="5">PLAT domain-containing protein 1</fullName>
        <shortName evidence="4">AtPLAT1</shortName>
        <shortName evidence="4">PLAT domain protein 1</shortName>
    </recommendedName>
</protein>
<evidence type="ECO:0000255" key="1">
    <source>
        <dbReference type="PROSITE-ProRule" id="PRU00152"/>
    </source>
</evidence>
<evidence type="ECO:0000269" key="2">
    <source>
    </source>
</evidence>
<evidence type="ECO:0000269" key="3">
    <source>
    </source>
</evidence>
<evidence type="ECO:0000303" key="4">
    <source>
    </source>
</evidence>
<evidence type="ECO:0000305" key="5"/>
<evidence type="ECO:0000312" key="6">
    <source>
        <dbReference type="Araport" id="AT4G39730"/>
    </source>
</evidence>
<evidence type="ECO:0007744" key="7">
    <source>
    </source>
</evidence>
<organism>
    <name type="scientific">Arabidopsis thaliana</name>
    <name type="common">Mouse-ear cress</name>
    <dbReference type="NCBI Taxonomy" id="3702"/>
    <lineage>
        <taxon>Eukaryota</taxon>
        <taxon>Viridiplantae</taxon>
        <taxon>Streptophyta</taxon>
        <taxon>Embryophyta</taxon>
        <taxon>Tracheophyta</taxon>
        <taxon>Spermatophyta</taxon>
        <taxon>Magnoliopsida</taxon>
        <taxon>eudicotyledons</taxon>
        <taxon>Gunneridae</taxon>
        <taxon>Pentapetalae</taxon>
        <taxon>rosids</taxon>
        <taxon>malvids</taxon>
        <taxon>Brassicales</taxon>
        <taxon>Brassicaceae</taxon>
        <taxon>Camelineae</taxon>
        <taxon>Arabidopsis</taxon>
    </lineage>
</organism>
<feature type="signal peptide" evidence="7">
    <location>
        <begin position="1"/>
        <end position="14"/>
    </location>
</feature>
<feature type="chain" id="PRO_5006739242" description="PLAT domain-containing protein 1">
    <location>
        <begin position="15"/>
        <end position="181"/>
    </location>
</feature>
<feature type="domain" description="PLAT" evidence="1">
    <location>
        <begin position="29"/>
        <end position="156"/>
    </location>
</feature>
<feature type="modified residue" description="N-acetylalanine" evidence="7">
    <location>
        <position position="15"/>
    </location>
</feature>